<name>VG02_ICHVA</name>
<organismHost>
    <name type="scientific">Ictaluridae</name>
    <name type="common">bullhead catfishes</name>
    <dbReference type="NCBI Taxonomy" id="7996"/>
</organismHost>
<feature type="chain" id="PRO_0000222089" description="Uncharacterized protein ORF2">
    <location>
        <begin position="1"/>
        <end position="407"/>
    </location>
</feature>
<feature type="region of interest" description="Disordered" evidence="1">
    <location>
        <begin position="1"/>
        <end position="62"/>
    </location>
</feature>
<feature type="region of interest" description="Disordered" evidence="1">
    <location>
        <begin position="350"/>
        <end position="379"/>
    </location>
</feature>
<feature type="compositionally biased region" description="Basic and acidic residues" evidence="1">
    <location>
        <begin position="17"/>
        <end position="30"/>
    </location>
</feature>
<reference key="1">
    <citation type="journal article" date="1992" name="Virology">
        <title>Channel catfish virus: a new type of herpesvirus.</title>
        <authorList>
            <person name="Davison A.J."/>
        </authorList>
    </citation>
    <scope>NUCLEOTIDE SEQUENCE [LARGE SCALE GENOMIC DNA]</scope>
</reference>
<keyword id="KW-1185">Reference proteome</keyword>
<protein>
    <recommendedName>
        <fullName>Uncharacterized protein ORF2</fullName>
    </recommendedName>
</protein>
<accession>Q00126</accession>
<gene>
    <name type="primary">ORF2</name>
</gene>
<sequence length="407" mass="44741">MTGRHSPHRQTSPSPRPVEKMPRFQREHGASHRYTPMGKRPAAPANTGSHRGALLGRLNGDPERKGEFTAVSKLLKSRGYIPEARTALIEWVEKEGARRGGFEVMCGSILLPGHDESGRAIDDIFRDMSRSVRGEVASPIDELLFRVGNLLEVYVETTTGKPVPAKGLWGVVQVESTVTGIPKMIHVCLDRSLGVGYKCSFAKLWKKTIEELLGTGVGTTNPHCWFTRTIHSDAIQASFDGLNMIFELFGGRVRTGRVSPEGERRVFHTRCLGDDSFNALFAATVHDPTVSRAVFEARVRTVQTSYPAWYTFGDMWTPAPNNVGWVTTPEGSWCYDIRVRDLYNDPNKMSVTPAAAAPPGVPKPEHGEELEADPWKPSSTIGSPAPNLCALYTSGDSVELHAPLLPL</sequence>
<proteinExistence type="predicted"/>
<organism>
    <name type="scientific">Ictalurid herpesvirus 1 (strain Auburn)</name>
    <name type="common">IcHV-1</name>
    <name type="synonym">Channel catfish herpesvirus</name>
    <dbReference type="NCBI Taxonomy" id="766178"/>
    <lineage>
        <taxon>Viruses</taxon>
        <taxon>Duplodnaviria</taxon>
        <taxon>Heunggongvirae</taxon>
        <taxon>Peploviricota</taxon>
        <taxon>Herviviricetes</taxon>
        <taxon>Herpesvirales</taxon>
        <taxon>Alloherpesviridae</taxon>
        <taxon>Ictavirus</taxon>
        <taxon>Ictavirus ictaluridallo1</taxon>
        <taxon>Ictalurid herpesvirus 1</taxon>
    </lineage>
</organism>
<dbReference type="EMBL" id="M75136">
    <property type="protein sequence ID" value="AAA88183.1"/>
    <property type="molecule type" value="Genomic_DNA"/>
</dbReference>
<dbReference type="EMBL" id="M75136">
    <property type="protein sequence ID" value="AAA88105.1"/>
    <property type="molecule type" value="Genomic_DNA"/>
</dbReference>
<dbReference type="PIR" id="C36786">
    <property type="entry name" value="C36786"/>
</dbReference>
<dbReference type="KEGG" id="vg:1488399"/>
<dbReference type="KEGG" id="vg:1488411"/>
<dbReference type="Proteomes" id="UP000007643">
    <property type="component" value="Segment"/>
</dbReference>
<evidence type="ECO:0000256" key="1">
    <source>
        <dbReference type="SAM" id="MobiDB-lite"/>
    </source>
</evidence>